<evidence type="ECO:0000255" key="1">
    <source>
        <dbReference type="HAMAP-Rule" id="MF_00222"/>
    </source>
</evidence>
<name>AROE_STRMK</name>
<reference key="1">
    <citation type="journal article" date="2008" name="Genome Biol.">
        <title>The complete genome, comparative and functional analysis of Stenotrophomonas maltophilia reveals an organism heavily shielded by drug resistance determinants.</title>
        <authorList>
            <person name="Crossman L.C."/>
            <person name="Gould V.C."/>
            <person name="Dow J.M."/>
            <person name="Vernikos G.S."/>
            <person name="Okazaki A."/>
            <person name="Sebaihia M."/>
            <person name="Saunders D."/>
            <person name="Arrowsmith C."/>
            <person name="Carver T."/>
            <person name="Peters N."/>
            <person name="Adlem E."/>
            <person name="Kerhornou A."/>
            <person name="Lord A."/>
            <person name="Murphy L."/>
            <person name="Seeger K."/>
            <person name="Squares R."/>
            <person name="Rutter S."/>
            <person name="Quail M.A."/>
            <person name="Rajandream M.A."/>
            <person name="Harris D."/>
            <person name="Churcher C."/>
            <person name="Bentley S.D."/>
            <person name="Parkhill J."/>
            <person name="Thomson N.R."/>
            <person name="Avison M.B."/>
        </authorList>
    </citation>
    <scope>NUCLEOTIDE SEQUENCE [LARGE SCALE GENOMIC DNA]</scope>
    <source>
        <strain>K279a</strain>
    </source>
</reference>
<feature type="chain" id="PRO_1000204275" description="Shikimate dehydrogenase (NADP(+))">
    <location>
        <begin position="1"/>
        <end position="281"/>
    </location>
</feature>
<feature type="active site" description="Proton acceptor" evidence="1">
    <location>
        <position position="66"/>
    </location>
</feature>
<feature type="binding site" evidence="1">
    <location>
        <begin position="15"/>
        <end position="17"/>
    </location>
    <ligand>
        <name>shikimate</name>
        <dbReference type="ChEBI" id="CHEBI:36208"/>
    </ligand>
</feature>
<feature type="binding site" evidence="1">
    <location>
        <position position="62"/>
    </location>
    <ligand>
        <name>shikimate</name>
        <dbReference type="ChEBI" id="CHEBI:36208"/>
    </ligand>
</feature>
<feature type="binding site" evidence="1">
    <location>
        <position position="87"/>
    </location>
    <ligand>
        <name>shikimate</name>
        <dbReference type="ChEBI" id="CHEBI:36208"/>
    </ligand>
</feature>
<feature type="binding site" evidence="1">
    <location>
        <position position="102"/>
    </location>
    <ligand>
        <name>shikimate</name>
        <dbReference type="ChEBI" id="CHEBI:36208"/>
    </ligand>
</feature>
<feature type="binding site" evidence="1">
    <location>
        <begin position="127"/>
        <end position="131"/>
    </location>
    <ligand>
        <name>NADP(+)</name>
        <dbReference type="ChEBI" id="CHEBI:58349"/>
    </ligand>
</feature>
<feature type="binding site" evidence="1">
    <location>
        <begin position="151"/>
        <end position="156"/>
    </location>
    <ligand>
        <name>NADP(+)</name>
        <dbReference type="ChEBI" id="CHEBI:58349"/>
    </ligand>
</feature>
<feature type="binding site" evidence="1">
    <location>
        <position position="217"/>
    </location>
    <ligand>
        <name>NADP(+)</name>
        <dbReference type="ChEBI" id="CHEBI:58349"/>
    </ligand>
</feature>
<feature type="binding site" evidence="1">
    <location>
        <position position="219"/>
    </location>
    <ligand>
        <name>shikimate</name>
        <dbReference type="ChEBI" id="CHEBI:36208"/>
    </ligand>
</feature>
<feature type="binding site" evidence="1">
    <location>
        <position position="241"/>
    </location>
    <ligand>
        <name>NADP(+)</name>
        <dbReference type="ChEBI" id="CHEBI:58349"/>
    </ligand>
</feature>
<proteinExistence type="inferred from homology"/>
<dbReference type="EC" id="1.1.1.25" evidence="1"/>
<dbReference type="EMBL" id="AM743169">
    <property type="protein sequence ID" value="CAQ47852.1"/>
    <property type="molecule type" value="Genomic_DNA"/>
</dbReference>
<dbReference type="RefSeq" id="WP_012481556.1">
    <property type="nucleotide sequence ID" value="NC_010943.1"/>
</dbReference>
<dbReference type="SMR" id="B2FMH7"/>
<dbReference type="EnsemblBacteria" id="CAQ47852">
    <property type="protein sequence ID" value="CAQ47852"/>
    <property type="gene ID" value="Smlt4495"/>
</dbReference>
<dbReference type="KEGG" id="sml:Smlt4495"/>
<dbReference type="PATRIC" id="fig|522373.3.peg.4233"/>
<dbReference type="eggNOG" id="COG0169">
    <property type="taxonomic scope" value="Bacteria"/>
</dbReference>
<dbReference type="HOGENOM" id="CLU_044063_2_1_6"/>
<dbReference type="UniPathway" id="UPA00053">
    <property type="reaction ID" value="UER00087"/>
</dbReference>
<dbReference type="Proteomes" id="UP000008840">
    <property type="component" value="Chromosome"/>
</dbReference>
<dbReference type="GO" id="GO:0005829">
    <property type="term" value="C:cytosol"/>
    <property type="evidence" value="ECO:0007669"/>
    <property type="project" value="TreeGrafter"/>
</dbReference>
<dbReference type="GO" id="GO:0050661">
    <property type="term" value="F:NADP binding"/>
    <property type="evidence" value="ECO:0007669"/>
    <property type="project" value="InterPro"/>
</dbReference>
<dbReference type="GO" id="GO:0004764">
    <property type="term" value="F:shikimate 3-dehydrogenase (NADP+) activity"/>
    <property type="evidence" value="ECO:0007669"/>
    <property type="project" value="UniProtKB-UniRule"/>
</dbReference>
<dbReference type="GO" id="GO:0008652">
    <property type="term" value="P:amino acid biosynthetic process"/>
    <property type="evidence" value="ECO:0007669"/>
    <property type="project" value="UniProtKB-KW"/>
</dbReference>
<dbReference type="GO" id="GO:0009073">
    <property type="term" value="P:aromatic amino acid family biosynthetic process"/>
    <property type="evidence" value="ECO:0007669"/>
    <property type="project" value="UniProtKB-KW"/>
</dbReference>
<dbReference type="GO" id="GO:0009423">
    <property type="term" value="P:chorismate biosynthetic process"/>
    <property type="evidence" value="ECO:0007669"/>
    <property type="project" value="UniProtKB-UniRule"/>
</dbReference>
<dbReference type="GO" id="GO:0019632">
    <property type="term" value="P:shikimate metabolic process"/>
    <property type="evidence" value="ECO:0007669"/>
    <property type="project" value="InterPro"/>
</dbReference>
<dbReference type="CDD" id="cd01065">
    <property type="entry name" value="NAD_bind_Shikimate_DH"/>
    <property type="match status" value="1"/>
</dbReference>
<dbReference type="Gene3D" id="3.40.50.10860">
    <property type="entry name" value="Leucine Dehydrogenase, chain A, domain 1"/>
    <property type="match status" value="1"/>
</dbReference>
<dbReference type="Gene3D" id="3.40.50.720">
    <property type="entry name" value="NAD(P)-binding Rossmann-like Domain"/>
    <property type="match status" value="1"/>
</dbReference>
<dbReference type="HAMAP" id="MF_00222">
    <property type="entry name" value="Shikimate_DH_AroE"/>
    <property type="match status" value="1"/>
</dbReference>
<dbReference type="InterPro" id="IPR046346">
    <property type="entry name" value="Aminoacid_DH-like_N_sf"/>
</dbReference>
<dbReference type="InterPro" id="IPR036291">
    <property type="entry name" value="NAD(P)-bd_dom_sf"/>
</dbReference>
<dbReference type="InterPro" id="IPR041121">
    <property type="entry name" value="SDH_C"/>
</dbReference>
<dbReference type="InterPro" id="IPR011342">
    <property type="entry name" value="Shikimate_DH"/>
</dbReference>
<dbReference type="InterPro" id="IPR013708">
    <property type="entry name" value="Shikimate_DH-bd_N"/>
</dbReference>
<dbReference type="InterPro" id="IPR022893">
    <property type="entry name" value="Shikimate_DH_fam"/>
</dbReference>
<dbReference type="InterPro" id="IPR006151">
    <property type="entry name" value="Shikm_DH/Glu-tRNA_Rdtase"/>
</dbReference>
<dbReference type="NCBIfam" id="TIGR00507">
    <property type="entry name" value="aroE"/>
    <property type="match status" value="1"/>
</dbReference>
<dbReference type="NCBIfam" id="NF001310">
    <property type="entry name" value="PRK00258.1-2"/>
    <property type="match status" value="1"/>
</dbReference>
<dbReference type="PANTHER" id="PTHR21089:SF1">
    <property type="entry name" value="BIFUNCTIONAL 3-DEHYDROQUINATE DEHYDRATASE_SHIKIMATE DEHYDROGENASE, CHLOROPLASTIC"/>
    <property type="match status" value="1"/>
</dbReference>
<dbReference type="PANTHER" id="PTHR21089">
    <property type="entry name" value="SHIKIMATE DEHYDROGENASE"/>
    <property type="match status" value="1"/>
</dbReference>
<dbReference type="Pfam" id="PF18317">
    <property type="entry name" value="SDH_C"/>
    <property type="match status" value="1"/>
</dbReference>
<dbReference type="Pfam" id="PF01488">
    <property type="entry name" value="Shikimate_DH"/>
    <property type="match status" value="1"/>
</dbReference>
<dbReference type="Pfam" id="PF08501">
    <property type="entry name" value="Shikimate_dh_N"/>
    <property type="match status" value="1"/>
</dbReference>
<dbReference type="SUPFAM" id="SSF53223">
    <property type="entry name" value="Aminoacid dehydrogenase-like, N-terminal domain"/>
    <property type="match status" value="1"/>
</dbReference>
<dbReference type="SUPFAM" id="SSF51735">
    <property type="entry name" value="NAD(P)-binding Rossmann-fold domains"/>
    <property type="match status" value="1"/>
</dbReference>
<organism>
    <name type="scientific">Stenotrophomonas maltophilia (strain K279a)</name>
    <dbReference type="NCBI Taxonomy" id="522373"/>
    <lineage>
        <taxon>Bacteria</taxon>
        <taxon>Pseudomonadati</taxon>
        <taxon>Pseudomonadota</taxon>
        <taxon>Gammaproteobacteria</taxon>
        <taxon>Lysobacterales</taxon>
        <taxon>Lysobacteraceae</taxon>
        <taxon>Stenotrophomonas</taxon>
        <taxon>Stenotrophomonas maltophilia group</taxon>
    </lineage>
</organism>
<sequence length="281" mass="30256">MTDRYAVFGHPVAHSKSPQIHATFGRQEGIAVDYRAIDLAPEAFLAGLEAFAADGGVGANVTSPHKEAAFSVCTTLTARARRAGSVNTLLRKGDRWHGDTTDGIGLVRDLTDRHGLDLRGRRMLLIGAGGSARSVAPALLDAGITELVVVNRTPERADELIDAMGEPGRAISRYWEDLRDLGDFELIVNATSAGRDRDIEFKLPLSLVNSMTTAVDLNYGEAAIAFLAWARAAECRNTVDGLGMLVEQAAESFLQWHGVRPQTDEVYQSLRQGSAVLAGED</sequence>
<comment type="function">
    <text evidence="1">Involved in the biosynthesis of the chorismate, which leads to the biosynthesis of aromatic amino acids. Catalyzes the reversible NADPH linked reduction of 3-dehydroshikimate (DHSA) to yield shikimate (SA).</text>
</comment>
<comment type="catalytic activity">
    <reaction evidence="1">
        <text>shikimate + NADP(+) = 3-dehydroshikimate + NADPH + H(+)</text>
        <dbReference type="Rhea" id="RHEA:17737"/>
        <dbReference type="ChEBI" id="CHEBI:15378"/>
        <dbReference type="ChEBI" id="CHEBI:16630"/>
        <dbReference type="ChEBI" id="CHEBI:36208"/>
        <dbReference type="ChEBI" id="CHEBI:57783"/>
        <dbReference type="ChEBI" id="CHEBI:58349"/>
        <dbReference type="EC" id="1.1.1.25"/>
    </reaction>
</comment>
<comment type="pathway">
    <text evidence="1">Metabolic intermediate biosynthesis; chorismate biosynthesis; chorismate from D-erythrose 4-phosphate and phosphoenolpyruvate: step 4/7.</text>
</comment>
<comment type="subunit">
    <text evidence="1">Homodimer.</text>
</comment>
<comment type="similarity">
    <text evidence="1">Belongs to the shikimate dehydrogenase family.</text>
</comment>
<protein>
    <recommendedName>
        <fullName evidence="1">Shikimate dehydrogenase (NADP(+))</fullName>
        <shortName evidence="1">SDH</shortName>
        <ecNumber evidence="1">1.1.1.25</ecNumber>
    </recommendedName>
</protein>
<keyword id="KW-0028">Amino-acid biosynthesis</keyword>
<keyword id="KW-0057">Aromatic amino acid biosynthesis</keyword>
<keyword id="KW-0521">NADP</keyword>
<keyword id="KW-0560">Oxidoreductase</keyword>
<keyword id="KW-1185">Reference proteome</keyword>
<gene>
    <name evidence="1" type="primary">aroE</name>
    <name type="ordered locus">Smlt4495</name>
</gene>
<accession>B2FMH7</accession>